<gene>
    <name evidence="1" type="primary">tatB</name>
    <name type="ordered locus">Mmar10_1908</name>
</gene>
<name>TATB_MARMM</name>
<dbReference type="EMBL" id="CP000449">
    <property type="protein sequence ID" value="ABI66200.1"/>
    <property type="molecule type" value="Genomic_DNA"/>
</dbReference>
<dbReference type="RefSeq" id="WP_011643845.1">
    <property type="nucleotide sequence ID" value="NC_008347.1"/>
</dbReference>
<dbReference type="SMR" id="Q0AND7"/>
<dbReference type="STRING" id="394221.Mmar10_1908"/>
<dbReference type="KEGG" id="mmr:Mmar10_1908"/>
<dbReference type="eggNOG" id="COG1826">
    <property type="taxonomic scope" value="Bacteria"/>
</dbReference>
<dbReference type="HOGENOM" id="CLU_086034_1_3_5"/>
<dbReference type="OrthoDB" id="7206969at2"/>
<dbReference type="Proteomes" id="UP000001964">
    <property type="component" value="Chromosome"/>
</dbReference>
<dbReference type="GO" id="GO:0033281">
    <property type="term" value="C:TAT protein transport complex"/>
    <property type="evidence" value="ECO:0007669"/>
    <property type="project" value="UniProtKB-UniRule"/>
</dbReference>
<dbReference type="GO" id="GO:0008320">
    <property type="term" value="F:protein transmembrane transporter activity"/>
    <property type="evidence" value="ECO:0007669"/>
    <property type="project" value="UniProtKB-UniRule"/>
</dbReference>
<dbReference type="GO" id="GO:0043953">
    <property type="term" value="P:protein transport by the Tat complex"/>
    <property type="evidence" value="ECO:0007669"/>
    <property type="project" value="UniProtKB-UniRule"/>
</dbReference>
<dbReference type="Gene3D" id="1.20.5.3310">
    <property type="match status" value="1"/>
</dbReference>
<dbReference type="HAMAP" id="MF_00237">
    <property type="entry name" value="TatB"/>
    <property type="match status" value="1"/>
</dbReference>
<dbReference type="InterPro" id="IPR003369">
    <property type="entry name" value="TatA/B/E"/>
</dbReference>
<dbReference type="InterPro" id="IPR018448">
    <property type="entry name" value="TatB"/>
</dbReference>
<dbReference type="NCBIfam" id="TIGR01410">
    <property type="entry name" value="tatB"/>
    <property type="match status" value="1"/>
</dbReference>
<dbReference type="PANTHER" id="PTHR33162">
    <property type="entry name" value="SEC-INDEPENDENT PROTEIN TRANSLOCASE PROTEIN TATA, CHLOROPLASTIC"/>
    <property type="match status" value="1"/>
</dbReference>
<dbReference type="PANTHER" id="PTHR33162:SF1">
    <property type="entry name" value="SEC-INDEPENDENT PROTEIN TRANSLOCASE PROTEIN TATA, CHLOROPLASTIC"/>
    <property type="match status" value="1"/>
</dbReference>
<dbReference type="Pfam" id="PF02416">
    <property type="entry name" value="TatA_B_E"/>
    <property type="match status" value="1"/>
</dbReference>
<dbReference type="PRINTS" id="PR01506">
    <property type="entry name" value="TATBPROTEIN"/>
</dbReference>
<evidence type="ECO:0000255" key="1">
    <source>
        <dbReference type="HAMAP-Rule" id="MF_00237"/>
    </source>
</evidence>
<evidence type="ECO:0000256" key="2">
    <source>
        <dbReference type="SAM" id="MobiDB-lite"/>
    </source>
</evidence>
<accession>Q0AND7</accession>
<reference key="1">
    <citation type="submission" date="2006-08" db="EMBL/GenBank/DDBJ databases">
        <title>Complete sequence of Maricaulis maris MCS10.</title>
        <authorList>
            <consortium name="US DOE Joint Genome Institute"/>
            <person name="Copeland A."/>
            <person name="Lucas S."/>
            <person name="Lapidus A."/>
            <person name="Barry K."/>
            <person name="Detter J.C."/>
            <person name="Glavina del Rio T."/>
            <person name="Hammon N."/>
            <person name="Israni S."/>
            <person name="Dalin E."/>
            <person name="Tice H."/>
            <person name="Pitluck S."/>
            <person name="Saunders E."/>
            <person name="Brettin T."/>
            <person name="Bruce D."/>
            <person name="Han C."/>
            <person name="Tapia R."/>
            <person name="Gilna P."/>
            <person name="Schmutz J."/>
            <person name="Larimer F."/>
            <person name="Land M."/>
            <person name="Hauser L."/>
            <person name="Kyrpides N."/>
            <person name="Mikhailova N."/>
            <person name="Viollier P."/>
            <person name="Stephens C."/>
            <person name="Richardson P."/>
        </authorList>
    </citation>
    <scope>NUCLEOTIDE SEQUENCE [LARGE SCALE GENOMIC DNA]</scope>
    <source>
        <strain>MCS10</strain>
    </source>
</reference>
<protein>
    <recommendedName>
        <fullName evidence="1">Sec-independent protein translocase protein TatB</fullName>
    </recommendedName>
</protein>
<organism>
    <name type="scientific">Maricaulis maris (strain MCS10)</name>
    <name type="common">Caulobacter maris</name>
    <dbReference type="NCBI Taxonomy" id="394221"/>
    <lineage>
        <taxon>Bacteria</taxon>
        <taxon>Pseudomonadati</taxon>
        <taxon>Pseudomonadota</taxon>
        <taxon>Alphaproteobacteria</taxon>
        <taxon>Maricaulales</taxon>
        <taxon>Maricaulaceae</taxon>
        <taxon>Maricaulis</taxon>
    </lineage>
</organism>
<keyword id="KW-0997">Cell inner membrane</keyword>
<keyword id="KW-1003">Cell membrane</keyword>
<keyword id="KW-0472">Membrane</keyword>
<keyword id="KW-0653">Protein transport</keyword>
<keyword id="KW-1185">Reference proteome</keyword>
<keyword id="KW-0811">Translocation</keyword>
<keyword id="KW-0812">Transmembrane</keyword>
<keyword id="KW-1133">Transmembrane helix</keyword>
<keyword id="KW-0813">Transport</keyword>
<sequence length="169" mass="18178">MSPGIGMPELLVVLVLALVVVGPQQLPVMMRKVGQMMAQARAMAKDFQNSFEEIGRETELSELRREIDALKQANPINQIHGELDKAARGTQDDDIRALKLKHVEQNQAETDADKAAKAAKLAALDSEGPQSTTPEADARADAAASADETERAAPVETTPAKPVDEIKGR</sequence>
<comment type="function">
    <text evidence="1">Part of the twin-arginine translocation (Tat) system that transports large folded proteins containing a characteristic twin-arginine motif in their signal peptide across membranes. Together with TatC, TatB is part of a receptor directly interacting with Tat signal peptides. TatB may form an oligomeric binding site that transiently accommodates folded Tat precursor proteins before their translocation.</text>
</comment>
<comment type="subunit">
    <text evidence="1">The Tat system comprises two distinct complexes: a TatABC complex, containing multiple copies of TatA, TatB and TatC subunits, and a separate TatA complex, containing only TatA subunits. Substrates initially bind to the TatABC complex, which probably triggers association of the separate TatA complex to form the active translocon.</text>
</comment>
<comment type="subcellular location">
    <subcellularLocation>
        <location evidence="1">Cell inner membrane</location>
        <topology evidence="1">Single-pass membrane protein</topology>
    </subcellularLocation>
</comment>
<comment type="similarity">
    <text evidence="1">Belongs to the TatB family.</text>
</comment>
<feature type="chain" id="PRO_0000301181" description="Sec-independent protein translocase protein TatB">
    <location>
        <begin position="1"/>
        <end position="169"/>
    </location>
</feature>
<feature type="transmembrane region" description="Helical" evidence="1">
    <location>
        <begin position="2"/>
        <end position="22"/>
    </location>
</feature>
<feature type="region of interest" description="Disordered" evidence="2">
    <location>
        <begin position="106"/>
        <end position="169"/>
    </location>
</feature>
<proteinExistence type="inferred from homology"/>